<dbReference type="EC" id="7.1.2.2" evidence="1"/>
<dbReference type="EMBL" id="CP000270">
    <property type="protein sequence ID" value="ABE31086.1"/>
    <property type="molecule type" value="Genomic_DNA"/>
</dbReference>
<dbReference type="RefSeq" id="WP_011488687.1">
    <property type="nucleotide sequence ID" value="NC_007951.1"/>
</dbReference>
<dbReference type="SMR" id="Q13XV3"/>
<dbReference type="STRING" id="266265.Bxe_A1879"/>
<dbReference type="KEGG" id="bxb:DR64_4041"/>
<dbReference type="KEGG" id="bxe:Bxe_A1879"/>
<dbReference type="PATRIC" id="fig|266265.5.peg.2667"/>
<dbReference type="eggNOG" id="COG0055">
    <property type="taxonomic scope" value="Bacteria"/>
</dbReference>
<dbReference type="OrthoDB" id="9801639at2"/>
<dbReference type="Proteomes" id="UP000001817">
    <property type="component" value="Chromosome 1"/>
</dbReference>
<dbReference type="GO" id="GO:0005886">
    <property type="term" value="C:plasma membrane"/>
    <property type="evidence" value="ECO:0007669"/>
    <property type="project" value="UniProtKB-SubCell"/>
</dbReference>
<dbReference type="GO" id="GO:0045259">
    <property type="term" value="C:proton-transporting ATP synthase complex"/>
    <property type="evidence" value="ECO:0007669"/>
    <property type="project" value="UniProtKB-KW"/>
</dbReference>
<dbReference type="GO" id="GO:0005524">
    <property type="term" value="F:ATP binding"/>
    <property type="evidence" value="ECO:0007669"/>
    <property type="project" value="UniProtKB-UniRule"/>
</dbReference>
<dbReference type="GO" id="GO:0016887">
    <property type="term" value="F:ATP hydrolysis activity"/>
    <property type="evidence" value="ECO:0007669"/>
    <property type="project" value="InterPro"/>
</dbReference>
<dbReference type="GO" id="GO:0046933">
    <property type="term" value="F:proton-transporting ATP synthase activity, rotational mechanism"/>
    <property type="evidence" value="ECO:0007669"/>
    <property type="project" value="UniProtKB-UniRule"/>
</dbReference>
<dbReference type="CDD" id="cd18110">
    <property type="entry name" value="ATP-synt_F1_beta_C"/>
    <property type="match status" value="1"/>
</dbReference>
<dbReference type="CDD" id="cd18115">
    <property type="entry name" value="ATP-synt_F1_beta_N"/>
    <property type="match status" value="1"/>
</dbReference>
<dbReference type="CDD" id="cd01133">
    <property type="entry name" value="F1-ATPase_beta_CD"/>
    <property type="match status" value="1"/>
</dbReference>
<dbReference type="FunFam" id="3.40.50.300:FF:001630">
    <property type="entry name" value="ATP synthase subunit beta"/>
    <property type="match status" value="1"/>
</dbReference>
<dbReference type="Gene3D" id="2.40.10.170">
    <property type="match status" value="1"/>
</dbReference>
<dbReference type="Gene3D" id="1.10.1140.10">
    <property type="entry name" value="Bovine Mitochondrial F1-atpase, Atp Synthase Beta Chain, Chain D, domain 3"/>
    <property type="match status" value="1"/>
</dbReference>
<dbReference type="Gene3D" id="3.40.50.300">
    <property type="entry name" value="P-loop containing nucleotide triphosphate hydrolases"/>
    <property type="match status" value="1"/>
</dbReference>
<dbReference type="HAMAP" id="MF_01347">
    <property type="entry name" value="ATP_synth_beta_bact"/>
    <property type="match status" value="1"/>
</dbReference>
<dbReference type="InterPro" id="IPR003593">
    <property type="entry name" value="AAA+_ATPase"/>
</dbReference>
<dbReference type="InterPro" id="IPR055190">
    <property type="entry name" value="ATP-synt_VA_C"/>
</dbReference>
<dbReference type="InterPro" id="IPR005722">
    <property type="entry name" value="ATP_synth_F1_bsu"/>
</dbReference>
<dbReference type="InterPro" id="IPR020003">
    <property type="entry name" value="ATPase_a/bsu_AS"/>
</dbReference>
<dbReference type="InterPro" id="IPR050053">
    <property type="entry name" value="ATPase_alpha/beta_chains"/>
</dbReference>
<dbReference type="InterPro" id="IPR004100">
    <property type="entry name" value="ATPase_F1/V1/A1_a/bsu_N"/>
</dbReference>
<dbReference type="InterPro" id="IPR036121">
    <property type="entry name" value="ATPase_F1/V1/A1_a/bsu_N_sf"/>
</dbReference>
<dbReference type="InterPro" id="IPR000194">
    <property type="entry name" value="ATPase_F1/V1/A1_a/bsu_nucl-bd"/>
</dbReference>
<dbReference type="InterPro" id="IPR024034">
    <property type="entry name" value="ATPase_F1/V1_b/a_C"/>
</dbReference>
<dbReference type="InterPro" id="IPR027417">
    <property type="entry name" value="P-loop_NTPase"/>
</dbReference>
<dbReference type="NCBIfam" id="TIGR01039">
    <property type="entry name" value="atpD"/>
    <property type="match status" value="1"/>
</dbReference>
<dbReference type="PANTHER" id="PTHR15184">
    <property type="entry name" value="ATP SYNTHASE"/>
    <property type="match status" value="1"/>
</dbReference>
<dbReference type="PANTHER" id="PTHR15184:SF71">
    <property type="entry name" value="ATP SYNTHASE SUBUNIT BETA, MITOCHONDRIAL"/>
    <property type="match status" value="1"/>
</dbReference>
<dbReference type="Pfam" id="PF00006">
    <property type="entry name" value="ATP-synt_ab"/>
    <property type="match status" value="1"/>
</dbReference>
<dbReference type="Pfam" id="PF02874">
    <property type="entry name" value="ATP-synt_ab_N"/>
    <property type="match status" value="1"/>
</dbReference>
<dbReference type="Pfam" id="PF22919">
    <property type="entry name" value="ATP-synt_VA_C"/>
    <property type="match status" value="1"/>
</dbReference>
<dbReference type="SMART" id="SM00382">
    <property type="entry name" value="AAA"/>
    <property type="match status" value="1"/>
</dbReference>
<dbReference type="SUPFAM" id="SSF47917">
    <property type="entry name" value="C-terminal domain of alpha and beta subunits of F1 ATP synthase"/>
    <property type="match status" value="1"/>
</dbReference>
<dbReference type="SUPFAM" id="SSF50615">
    <property type="entry name" value="N-terminal domain of alpha and beta subunits of F1 ATP synthase"/>
    <property type="match status" value="1"/>
</dbReference>
<dbReference type="SUPFAM" id="SSF52540">
    <property type="entry name" value="P-loop containing nucleoside triphosphate hydrolases"/>
    <property type="match status" value="1"/>
</dbReference>
<dbReference type="PROSITE" id="PS00152">
    <property type="entry name" value="ATPASE_ALPHA_BETA"/>
    <property type="match status" value="1"/>
</dbReference>
<reference key="1">
    <citation type="journal article" date="2006" name="Proc. Natl. Acad. Sci. U.S.A.">
        <title>Burkholderia xenovorans LB400 harbors a multi-replicon, 9.73-Mbp genome shaped for versatility.</title>
        <authorList>
            <person name="Chain P.S.G."/>
            <person name="Denef V.J."/>
            <person name="Konstantinidis K.T."/>
            <person name="Vergez L.M."/>
            <person name="Agullo L."/>
            <person name="Reyes V.L."/>
            <person name="Hauser L."/>
            <person name="Cordova M."/>
            <person name="Gomez L."/>
            <person name="Gonzalez M."/>
            <person name="Land M."/>
            <person name="Lao V."/>
            <person name="Larimer F."/>
            <person name="LiPuma J.J."/>
            <person name="Mahenthiralingam E."/>
            <person name="Malfatti S.A."/>
            <person name="Marx C.J."/>
            <person name="Parnell J.J."/>
            <person name="Ramette A."/>
            <person name="Richardson P."/>
            <person name="Seeger M."/>
            <person name="Smith D."/>
            <person name="Spilker T."/>
            <person name="Sul W.J."/>
            <person name="Tsoi T.V."/>
            <person name="Ulrich L.E."/>
            <person name="Zhulin I.B."/>
            <person name="Tiedje J.M."/>
        </authorList>
    </citation>
    <scope>NUCLEOTIDE SEQUENCE [LARGE SCALE GENOMIC DNA]</scope>
    <source>
        <strain>LB400</strain>
    </source>
</reference>
<feature type="chain" id="PRO_0000339500" description="ATP synthase subunit beta 1">
    <location>
        <begin position="1"/>
        <end position="496"/>
    </location>
</feature>
<feature type="region of interest" description="Disordered" evidence="2">
    <location>
        <begin position="474"/>
        <end position="496"/>
    </location>
</feature>
<feature type="compositionally biased region" description="Low complexity" evidence="2">
    <location>
        <begin position="476"/>
        <end position="489"/>
    </location>
</feature>
<feature type="binding site" evidence="1">
    <location>
        <begin position="167"/>
        <end position="174"/>
    </location>
    <ligand>
        <name>ATP</name>
        <dbReference type="ChEBI" id="CHEBI:30616"/>
    </ligand>
</feature>
<accession>Q13XV3</accession>
<comment type="function">
    <text evidence="1">Produces ATP from ADP in the presence of a proton gradient across the membrane. The catalytic sites are hosted primarily by the beta subunits.</text>
</comment>
<comment type="catalytic activity">
    <reaction evidence="1">
        <text>ATP + H2O + 4 H(+)(in) = ADP + phosphate + 5 H(+)(out)</text>
        <dbReference type="Rhea" id="RHEA:57720"/>
        <dbReference type="ChEBI" id="CHEBI:15377"/>
        <dbReference type="ChEBI" id="CHEBI:15378"/>
        <dbReference type="ChEBI" id="CHEBI:30616"/>
        <dbReference type="ChEBI" id="CHEBI:43474"/>
        <dbReference type="ChEBI" id="CHEBI:456216"/>
        <dbReference type="EC" id="7.1.2.2"/>
    </reaction>
</comment>
<comment type="subunit">
    <text evidence="1">F-type ATPases have 2 components, CF(1) - the catalytic core - and CF(0) - the membrane proton channel. CF(1) has five subunits: alpha(3), beta(3), gamma(1), delta(1), epsilon(1). CF(0) has three main subunits: a(1), b(2) and c(9-12). The alpha and beta chains form an alternating ring which encloses part of the gamma chain. CF(1) is attached to CF(0) by a central stalk formed by the gamma and epsilon chains, while a peripheral stalk is formed by the delta and b chains.</text>
</comment>
<comment type="subcellular location">
    <subcellularLocation>
        <location evidence="1">Cell inner membrane</location>
        <topology evidence="1">Peripheral membrane protein</topology>
    </subcellularLocation>
</comment>
<comment type="similarity">
    <text evidence="1">Belongs to the ATPase alpha/beta chains family.</text>
</comment>
<organism>
    <name type="scientific">Paraburkholderia xenovorans (strain LB400)</name>
    <dbReference type="NCBI Taxonomy" id="266265"/>
    <lineage>
        <taxon>Bacteria</taxon>
        <taxon>Pseudomonadati</taxon>
        <taxon>Pseudomonadota</taxon>
        <taxon>Betaproteobacteria</taxon>
        <taxon>Burkholderiales</taxon>
        <taxon>Burkholderiaceae</taxon>
        <taxon>Paraburkholderia</taxon>
    </lineage>
</organism>
<keyword id="KW-0066">ATP synthesis</keyword>
<keyword id="KW-0067">ATP-binding</keyword>
<keyword id="KW-0997">Cell inner membrane</keyword>
<keyword id="KW-1003">Cell membrane</keyword>
<keyword id="KW-0139">CF(1)</keyword>
<keyword id="KW-0375">Hydrogen ion transport</keyword>
<keyword id="KW-0406">Ion transport</keyword>
<keyword id="KW-0472">Membrane</keyword>
<keyword id="KW-0547">Nucleotide-binding</keyword>
<keyword id="KW-1185">Reference proteome</keyword>
<keyword id="KW-1278">Translocase</keyword>
<keyword id="KW-0813">Transport</keyword>
<sequence>MPSHSAAAFSATPSAARDGYVVAVRGAIVDVRFERDALPAVGDALVVTPDDLAPVLAEVQAHLSETMVRALALQTTAGLRRGTRVQAPGGPIETPVGEAVLGRLLDVTGATRDDGPALPAQIERRPIHRAAPPLASLKGTSTLFSTGIKVIDLLAPLAQGGKAAMFGGAGVGKTVLVMELIHAVVERYEGISVFAGVGERSREGHEMLLDMRTSGVLPRTVLVYGQMNEPPGARWRVPFTALTIAEYFRDERRQNVLLLMDNVFRFVQAGAEVSGLLGRMPSRVGYQPTLATEVASLQERIVSVGGVSVTAIEAVYVPADDFTDPAVTAIAAHLDSMVVLSRSMAAEGMYPAVDPIASSSILLDPLVVGEEHAAVATEVRRIIEHYRELQDVISLLGVEELGAEDRALVGRARRLQRFLTQPFAVTEAFTGEPGRSVALADTIAGCKAILAGECDTWQESSLYMIGTLDEGRQREAAAAQQSTAQQAAPAEKEPAA</sequence>
<gene>
    <name evidence="1" type="primary">atpD1</name>
    <name type="ordered locus">Bxeno_A2548</name>
    <name type="ORF">Bxe_A1879</name>
</gene>
<protein>
    <recommendedName>
        <fullName evidence="1">ATP synthase subunit beta 1</fullName>
        <ecNumber evidence="1">7.1.2.2</ecNumber>
    </recommendedName>
    <alternativeName>
        <fullName evidence="1">ATP synthase F1 sector subunit beta 1</fullName>
    </alternativeName>
    <alternativeName>
        <fullName evidence="1">F-ATPase subunit beta 1</fullName>
    </alternativeName>
</protein>
<proteinExistence type="inferred from homology"/>
<name>ATPB1_PARXL</name>
<evidence type="ECO:0000255" key="1">
    <source>
        <dbReference type="HAMAP-Rule" id="MF_01347"/>
    </source>
</evidence>
<evidence type="ECO:0000256" key="2">
    <source>
        <dbReference type="SAM" id="MobiDB-lite"/>
    </source>
</evidence>